<protein>
    <recommendedName>
        <fullName evidence="1">Holliday junction branch migration complex subunit RuvB</fullName>
        <ecNumber evidence="1">3.6.4.-</ecNumber>
    </recommendedName>
</protein>
<reference key="1">
    <citation type="journal article" date="2008" name="Genome Res.">
        <title>Chlamydia trachomatis: genome sequence analysis of lymphogranuloma venereum isolates.</title>
        <authorList>
            <person name="Thomson N.R."/>
            <person name="Holden M.T.G."/>
            <person name="Carder C."/>
            <person name="Lennard N."/>
            <person name="Lockey S.J."/>
            <person name="Marsh P."/>
            <person name="Skipp P."/>
            <person name="O'Connor C.D."/>
            <person name="Goodhead I."/>
            <person name="Norbertzcak H."/>
            <person name="Harris B."/>
            <person name="Ormond D."/>
            <person name="Rance R."/>
            <person name="Quail M.A."/>
            <person name="Parkhill J."/>
            <person name="Stephens R.S."/>
            <person name="Clarke I.N."/>
        </authorList>
    </citation>
    <scope>NUCLEOTIDE SEQUENCE [LARGE SCALE GENOMIC DNA]</scope>
    <source>
        <strain>ATCC VR-902B / DSM 19102 / 434/Bu</strain>
    </source>
</reference>
<sequence length="334" mass="37289">MTHKISVLHQDKKFDFSLRPKKLTEFCGQKQLKERLDLFLRAAVQRNEVPGHCLFYGPPGLGKTSLAHIMANTIGKGLVIASGPQLLKPSDLIGLLTGLQEGDIFFIDEIHRMGKAAEEYLYPAMEDFKVDITLDSGPGARSVRLDLAPFTLVGATTRAGMLSEPLRTRFAFTGRVDYYTDEDLVSILSRSSQLLAIEANQETLLEIARRARGTPRLANNLLRWVRDFAQMREGNCINSAVAEKALAMLLIDNLGLNEIDIKLLSVMIDFYQGGPVGMKTLAMAVGEDVRTLEDMYEPFLILKGLVQRTARGRVATPLAYEHLNRNPKDRWGEE</sequence>
<dbReference type="EC" id="3.6.4.-" evidence="1"/>
<dbReference type="EMBL" id="AM884176">
    <property type="protein sequence ID" value="CAP03735.1"/>
    <property type="molecule type" value="Genomic_DNA"/>
</dbReference>
<dbReference type="RefSeq" id="WP_009873512.1">
    <property type="nucleotide sequence ID" value="NC_010287.1"/>
</dbReference>
<dbReference type="RefSeq" id="YP_001654379.1">
    <property type="nucleotide sequence ID" value="NC_010287.1"/>
</dbReference>
<dbReference type="SMR" id="B0B9E8"/>
<dbReference type="KEGG" id="ctb:CTL0296"/>
<dbReference type="PATRIC" id="fig|471472.4.peg.320"/>
<dbReference type="HOGENOM" id="CLU_055599_1_0_0"/>
<dbReference type="Proteomes" id="UP001154402">
    <property type="component" value="Chromosome"/>
</dbReference>
<dbReference type="GO" id="GO:0005737">
    <property type="term" value="C:cytoplasm"/>
    <property type="evidence" value="ECO:0007669"/>
    <property type="project" value="UniProtKB-SubCell"/>
</dbReference>
<dbReference type="GO" id="GO:0048476">
    <property type="term" value="C:Holliday junction resolvase complex"/>
    <property type="evidence" value="ECO:0007669"/>
    <property type="project" value="UniProtKB-UniRule"/>
</dbReference>
<dbReference type="GO" id="GO:0005524">
    <property type="term" value="F:ATP binding"/>
    <property type="evidence" value="ECO:0007669"/>
    <property type="project" value="UniProtKB-UniRule"/>
</dbReference>
<dbReference type="GO" id="GO:0016887">
    <property type="term" value="F:ATP hydrolysis activity"/>
    <property type="evidence" value="ECO:0007669"/>
    <property type="project" value="InterPro"/>
</dbReference>
<dbReference type="GO" id="GO:0000400">
    <property type="term" value="F:four-way junction DNA binding"/>
    <property type="evidence" value="ECO:0007669"/>
    <property type="project" value="UniProtKB-UniRule"/>
</dbReference>
<dbReference type="GO" id="GO:0009378">
    <property type="term" value="F:four-way junction helicase activity"/>
    <property type="evidence" value="ECO:0007669"/>
    <property type="project" value="InterPro"/>
</dbReference>
<dbReference type="GO" id="GO:0006310">
    <property type="term" value="P:DNA recombination"/>
    <property type="evidence" value="ECO:0007669"/>
    <property type="project" value="UniProtKB-UniRule"/>
</dbReference>
<dbReference type="GO" id="GO:0006281">
    <property type="term" value="P:DNA repair"/>
    <property type="evidence" value="ECO:0007669"/>
    <property type="project" value="UniProtKB-UniRule"/>
</dbReference>
<dbReference type="CDD" id="cd00009">
    <property type="entry name" value="AAA"/>
    <property type="match status" value="1"/>
</dbReference>
<dbReference type="Gene3D" id="1.10.8.60">
    <property type="match status" value="1"/>
</dbReference>
<dbReference type="Gene3D" id="3.40.50.300">
    <property type="entry name" value="P-loop containing nucleotide triphosphate hydrolases"/>
    <property type="match status" value="1"/>
</dbReference>
<dbReference type="Gene3D" id="1.10.10.10">
    <property type="entry name" value="Winged helix-like DNA-binding domain superfamily/Winged helix DNA-binding domain"/>
    <property type="match status" value="1"/>
</dbReference>
<dbReference type="HAMAP" id="MF_00016">
    <property type="entry name" value="DNA_HJ_migration_RuvB"/>
    <property type="match status" value="1"/>
</dbReference>
<dbReference type="InterPro" id="IPR003593">
    <property type="entry name" value="AAA+_ATPase"/>
</dbReference>
<dbReference type="InterPro" id="IPR041445">
    <property type="entry name" value="AAA_lid_4"/>
</dbReference>
<dbReference type="InterPro" id="IPR004605">
    <property type="entry name" value="DNA_helicase_Holl-junc_RuvB"/>
</dbReference>
<dbReference type="InterPro" id="IPR027417">
    <property type="entry name" value="P-loop_NTPase"/>
</dbReference>
<dbReference type="InterPro" id="IPR008824">
    <property type="entry name" value="RuvB-like_N"/>
</dbReference>
<dbReference type="InterPro" id="IPR008823">
    <property type="entry name" value="RuvB_C"/>
</dbReference>
<dbReference type="InterPro" id="IPR036388">
    <property type="entry name" value="WH-like_DNA-bd_sf"/>
</dbReference>
<dbReference type="InterPro" id="IPR036390">
    <property type="entry name" value="WH_DNA-bd_sf"/>
</dbReference>
<dbReference type="NCBIfam" id="NF000868">
    <property type="entry name" value="PRK00080.1"/>
    <property type="match status" value="1"/>
</dbReference>
<dbReference type="NCBIfam" id="TIGR00635">
    <property type="entry name" value="ruvB"/>
    <property type="match status" value="1"/>
</dbReference>
<dbReference type="PANTHER" id="PTHR42848">
    <property type="match status" value="1"/>
</dbReference>
<dbReference type="PANTHER" id="PTHR42848:SF1">
    <property type="entry name" value="HOLLIDAY JUNCTION BRANCH MIGRATION COMPLEX SUBUNIT RUVB"/>
    <property type="match status" value="1"/>
</dbReference>
<dbReference type="Pfam" id="PF17864">
    <property type="entry name" value="AAA_lid_4"/>
    <property type="match status" value="1"/>
</dbReference>
<dbReference type="Pfam" id="PF05491">
    <property type="entry name" value="RuvB_C"/>
    <property type="match status" value="1"/>
</dbReference>
<dbReference type="Pfam" id="PF05496">
    <property type="entry name" value="RuvB_N"/>
    <property type="match status" value="1"/>
</dbReference>
<dbReference type="SMART" id="SM00382">
    <property type="entry name" value="AAA"/>
    <property type="match status" value="1"/>
</dbReference>
<dbReference type="SUPFAM" id="SSF52540">
    <property type="entry name" value="P-loop containing nucleoside triphosphate hydrolases"/>
    <property type="match status" value="1"/>
</dbReference>
<dbReference type="SUPFAM" id="SSF46785">
    <property type="entry name" value="Winged helix' DNA-binding domain"/>
    <property type="match status" value="1"/>
</dbReference>
<proteinExistence type="inferred from homology"/>
<evidence type="ECO:0000255" key="1">
    <source>
        <dbReference type="HAMAP-Rule" id="MF_00016"/>
    </source>
</evidence>
<feature type="chain" id="PRO_1000089629" description="Holliday junction branch migration complex subunit RuvB">
    <location>
        <begin position="1"/>
        <end position="334"/>
    </location>
</feature>
<feature type="region of interest" description="Large ATPase domain (RuvB-L)" evidence="1">
    <location>
        <begin position="1"/>
        <end position="179"/>
    </location>
</feature>
<feature type="region of interest" description="Small ATPAse domain (RuvB-S)" evidence="1">
    <location>
        <begin position="180"/>
        <end position="250"/>
    </location>
</feature>
<feature type="region of interest" description="Head domain (RuvB-H)" evidence="1">
    <location>
        <begin position="253"/>
        <end position="334"/>
    </location>
</feature>
<feature type="binding site" evidence="1">
    <location>
        <position position="18"/>
    </location>
    <ligand>
        <name>ATP</name>
        <dbReference type="ChEBI" id="CHEBI:30616"/>
    </ligand>
</feature>
<feature type="binding site" evidence="1">
    <location>
        <position position="19"/>
    </location>
    <ligand>
        <name>ATP</name>
        <dbReference type="ChEBI" id="CHEBI:30616"/>
    </ligand>
</feature>
<feature type="binding site" evidence="1">
    <location>
        <position position="60"/>
    </location>
    <ligand>
        <name>ATP</name>
        <dbReference type="ChEBI" id="CHEBI:30616"/>
    </ligand>
</feature>
<feature type="binding site" evidence="1">
    <location>
        <position position="63"/>
    </location>
    <ligand>
        <name>ATP</name>
        <dbReference type="ChEBI" id="CHEBI:30616"/>
    </ligand>
</feature>
<feature type="binding site" evidence="1">
    <location>
        <position position="64"/>
    </location>
    <ligand>
        <name>ATP</name>
        <dbReference type="ChEBI" id="CHEBI:30616"/>
    </ligand>
</feature>
<feature type="binding site" evidence="1">
    <location>
        <position position="64"/>
    </location>
    <ligand>
        <name>Mg(2+)</name>
        <dbReference type="ChEBI" id="CHEBI:18420"/>
    </ligand>
</feature>
<feature type="binding site" evidence="1">
    <location>
        <position position="65"/>
    </location>
    <ligand>
        <name>ATP</name>
        <dbReference type="ChEBI" id="CHEBI:30616"/>
    </ligand>
</feature>
<feature type="binding site" evidence="1">
    <location>
        <begin position="126"/>
        <end position="128"/>
    </location>
    <ligand>
        <name>ATP</name>
        <dbReference type="ChEBI" id="CHEBI:30616"/>
    </ligand>
</feature>
<feature type="binding site" evidence="1">
    <location>
        <position position="169"/>
    </location>
    <ligand>
        <name>ATP</name>
        <dbReference type="ChEBI" id="CHEBI:30616"/>
    </ligand>
</feature>
<feature type="binding site" evidence="1">
    <location>
        <position position="179"/>
    </location>
    <ligand>
        <name>ATP</name>
        <dbReference type="ChEBI" id="CHEBI:30616"/>
    </ligand>
</feature>
<feature type="binding site" evidence="1">
    <location>
        <position position="216"/>
    </location>
    <ligand>
        <name>ATP</name>
        <dbReference type="ChEBI" id="CHEBI:30616"/>
    </ligand>
</feature>
<feature type="binding site" evidence="1">
    <location>
        <position position="308"/>
    </location>
    <ligand>
        <name>DNA</name>
        <dbReference type="ChEBI" id="CHEBI:16991"/>
    </ligand>
</feature>
<feature type="binding site" evidence="1">
    <location>
        <position position="313"/>
    </location>
    <ligand>
        <name>DNA</name>
        <dbReference type="ChEBI" id="CHEBI:16991"/>
    </ligand>
</feature>
<organism>
    <name type="scientific">Chlamydia trachomatis serovar L2 (strain ATCC VR-902B / DSM 19102 / 434/Bu)</name>
    <dbReference type="NCBI Taxonomy" id="471472"/>
    <lineage>
        <taxon>Bacteria</taxon>
        <taxon>Pseudomonadati</taxon>
        <taxon>Chlamydiota</taxon>
        <taxon>Chlamydiia</taxon>
        <taxon>Chlamydiales</taxon>
        <taxon>Chlamydiaceae</taxon>
        <taxon>Chlamydia/Chlamydophila group</taxon>
        <taxon>Chlamydia</taxon>
    </lineage>
</organism>
<accession>B0B9E8</accession>
<name>RUVB_CHLT2</name>
<comment type="function">
    <text evidence="1">The RuvA-RuvB-RuvC complex processes Holliday junction (HJ) DNA during genetic recombination and DNA repair, while the RuvA-RuvB complex plays an important role in the rescue of blocked DNA replication forks via replication fork reversal (RFR). RuvA specifically binds to HJ cruciform DNA, conferring on it an open structure. The RuvB hexamer acts as an ATP-dependent pump, pulling dsDNA into and through the RuvAB complex. RuvB forms 2 homohexamers on either side of HJ DNA bound by 1 or 2 RuvA tetramers; 4 subunits per hexamer contact DNA at a time. Coordinated motions by a converter formed by DNA-disengaged RuvB subunits stimulates ATP hydrolysis and nucleotide exchange. Immobilization of the converter enables RuvB to convert the ATP-contained energy into a lever motion, pulling 2 nucleotides of DNA out of the RuvA tetramer per ATP hydrolyzed, thus driving DNA branch migration. The RuvB motors rotate together with the DNA substrate, which together with the progressing nucleotide cycle form the mechanistic basis for DNA recombination by continuous HJ branch migration. Branch migration allows RuvC to scan DNA until it finds its consensus sequence, where it cleaves and resolves cruciform DNA.</text>
</comment>
<comment type="catalytic activity">
    <reaction evidence="1">
        <text>ATP + H2O = ADP + phosphate + H(+)</text>
        <dbReference type="Rhea" id="RHEA:13065"/>
        <dbReference type="ChEBI" id="CHEBI:15377"/>
        <dbReference type="ChEBI" id="CHEBI:15378"/>
        <dbReference type="ChEBI" id="CHEBI:30616"/>
        <dbReference type="ChEBI" id="CHEBI:43474"/>
        <dbReference type="ChEBI" id="CHEBI:456216"/>
    </reaction>
</comment>
<comment type="subunit">
    <text evidence="1">Homohexamer. Forms an RuvA(8)-RuvB(12)-Holliday junction (HJ) complex. HJ DNA is sandwiched between 2 RuvA tetramers; dsDNA enters through RuvA and exits via RuvB. An RuvB hexamer assembles on each DNA strand where it exits the tetramer. Each RuvB hexamer is contacted by two RuvA subunits (via domain III) on 2 adjacent RuvB subunits; this complex drives branch migration. In the full resolvosome a probable DNA-RuvA(4)-RuvB(12)-RuvC(2) complex forms which resolves the HJ.</text>
</comment>
<comment type="subcellular location">
    <subcellularLocation>
        <location evidence="1">Cytoplasm</location>
    </subcellularLocation>
</comment>
<comment type="domain">
    <text evidence="1">Has 3 domains, the large (RuvB-L) and small ATPase (RuvB-S) domains and the C-terminal head (RuvB-H) domain. The head domain binds DNA, while the ATPase domains jointly bind ATP, ADP or are empty depending on the state of the subunit in the translocation cycle. During a single DNA translocation step the structure of each domain remains the same, but their relative positions change.</text>
</comment>
<comment type="similarity">
    <text evidence="1">Belongs to the RuvB family.</text>
</comment>
<keyword id="KW-0067">ATP-binding</keyword>
<keyword id="KW-0963">Cytoplasm</keyword>
<keyword id="KW-0227">DNA damage</keyword>
<keyword id="KW-0233">DNA recombination</keyword>
<keyword id="KW-0234">DNA repair</keyword>
<keyword id="KW-0238">DNA-binding</keyword>
<keyword id="KW-0378">Hydrolase</keyword>
<keyword id="KW-0547">Nucleotide-binding</keyword>
<gene>
    <name evidence="1" type="primary">ruvB</name>
    <name type="ordered locus">CTL0296</name>
</gene>